<evidence type="ECO:0000255" key="1">
    <source>
        <dbReference type="HAMAP-Rule" id="MF_00131"/>
    </source>
</evidence>
<reference key="1">
    <citation type="journal article" date="2010" name="J. Bacteriol.">
        <title>Complete genome sequence of Beijerinckia indica subsp. indica.</title>
        <authorList>
            <person name="Tamas I."/>
            <person name="Dedysh S.N."/>
            <person name="Liesack W."/>
            <person name="Stott M.B."/>
            <person name="Alam M."/>
            <person name="Murrell J.C."/>
            <person name="Dunfield P.F."/>
        </authorList>
    </citation>
    <scope>NUCLEOTIDE SEQUENCE [LARGE SCALE GENOMIC DNA]</scope>
    <source>
        <strain>ATCC 9039 / DSM 1715 / NCIMB 8712</strain>
    </source>
</reference>
<sequence length="277" mass="28677">MPTRIDRRFEELAKAGRAGLVTFVMAGDPDLSTSLEILHALVRAGADVLEVGMPFTDPMADGPAIQAAGLRALKAGMTLRKTLDMVAAFRAKDATTPIILMGYYNPIYIFGVEAFLNRAKEVGVDGLIVVDLPPEEDEELCLPARAAGLNFIRLATPTTDAVRLPAVLANTSGFLYYVSITGITGAGVPDYSKVASAVAGIKAHTNLPVAVGFGVKTAESARTIACHADAVVVGSAIVDALRASLDGEGRATPACIGTVEKLVAELAEGVRSAAAAA</sequence>
<accession>B2IF46</accession>
<gene>
    <name evidence="1" type="primary">trpA</name>
    <name type="ordered locus">Bind_1988</name>
</gene>
<proteinExistence type="inferred from homology"/>
<feature type="chain" id="PRO_1000095694" description="Tryptophan synthase alpha chain">
    <location>
        <begin position="1"/>
        <end position="277"/>
    </location>
</feature>
<feature type="active site" description="Proton acceptor" evidence="1">
    <location>
        <position position="50"/>
    </location>
</feature>
<feature type="active site" description="Proton acceptor" evidence="1">
    <location>
        <position position="61"/>
    </location>
</feature>
<dbReference type="EC" id="4.2.1.20" evidence="1"/>
<dbReference type="EMBL" id="CP001016">
    <property type="protein sequence ID" value="ACB95611.1"/>
    <property type="molecule type" value="Genomic_DNA"/>
</dbReference>
<dbReference type="RefSeq" id="WP_012384967.1">
    <property type="nucleotide sequence ID" value="NC_010581.1"/>
</dbReference>
<dbReference type="SMR" id="B2IF46"/>
<dbReference type="STRING" id="395963.Bind_1988"/>
<dbReference type="KEGG" id="bid:Bind_1988"/>
<dbReference type="eggNOG" id="COG0159">
    <property type="taxonomic scope" value="Bacteria"/>
</dbReference>
<dbReference type="HOGENOM" id="CLU_016734_0_0_5"/>
<dbReference type="OrthoDB" id="9804578at2"/>
<dbReference type="UniPathway" id="UPA00035">
    <property type="reaction ID" value="UER00044"/>
</dbReference>
<dbReference type="Proteomes" id="UP000001695">
    <property type="component" value="Chromosome"/>
</dbReference>
<dbReference type="GO" id="GO:0005829">
    <property type="term" value="C:cytosol"/>
    <property type="evidence" value="ECO:0007669"/>
    <property type="project" value="TreeGrafter"/>
</dbReference>
<dbReference type="GO" id="GO:0004834">
    <property type="term" value="F:tryptophan synthase activity"/>
    <property type="evidence" value="ECO:0007669"/>
    <property type="project" value="UniProtKB-UniRule"/>
</dbReference>
<dbReference type="CDD" id="cd04724">
    <property type="entry name" value="Tryptophan_synthase_alpha"/>
    <property type="match status" value="1"/>
</dbReference>
<dbReference type="FunFam" id="3.20.20.70:FF:000037">
    <property type="entry name" value="Tryptophan synthase alpha chain"/>
    <property type="match status" value="1"/>
</dbReference>
<dbReference type="Gene3D" id="3.20.20.70">
    <property type="entry name" value="Aldolase class I"/>
    <property type="match status" value="1"/>
</dbReference>
<dbReference type="HAMAP" id="MF_00131">
    <property type="entry name" value="Trp_synth_alpha"/>
    <property type="match status" value="1"/>
</dbReference>
<dbReference type="InterPro" id="IPR013785">
    <property type="entry name" value="Aldolase_TIM"/>
</dbReference>
<dbReference type="InterPro" id="IPR011060">
    <property type="entry name" value="RibuloseP-bd_barrel"/>
</dbReference>
<dbReference type="InterPro" id="IPR018204">
    <property type="entry name" value="Trp_synthase_alpha_AS"/>
</dbReference>
<dbReference type="InterPro" id="IPR002028">
    <property type="entry name" value="Trp_synthase_suA"/>
</dbReference>
<dbReference type="NCBIfam" id="TIGR00262">
    <property type="entry name" value="trpA"/>
    <property type="match status" value="1"/>
</dbReference>
<dbReference type="PANTHER" id="PTHR43406:SF1">
    <property type="entry name" value="TRYPTOPHAN SYNTHASE ALPHA CHAIN, CHLOROPLASTIC"/>
    <property type="match status" value="1"/>
</dbReference>
<dbReference type="PANTHER" id="PTHR43406">
    <property type="entry name" value="TRYPTOPHAN SYNTHASE, ALPHA CHAIN"/>
    <property type="match status" value="1"/>
</dbReference>
<dbReference type="Pfam" id="PF00290">
    <property type="entry name" value="Trp_syntA"/>
    <property type="match status" value="1"/>
</dbReference>
<dbReference type="SUPFAM" id="SSF51366">
    <property type="entry name" value="Ribulose-phoshate binding barrel"/>
    <property type="match status" value="1"/>
</dbReference>
<dbReference type="PROSITE" id="PS00167">
    <property type="entry name" value="TRP_SYNTHASE_ALPHA"/>
    <property type="match status" value="1"/>
</dbReference>
<keyword id="KW-0028">Amino-acid biosynthesis</keyword>
<keyword id="KW-0057">Aromatic amino acid biosynthesis</keyword>
<keyword id="KW-0456">Lyase</keyword>
<keyword id="KW-1185">Reference proteome</keyword>
<keyword id="KW-0822">Tryptophan biosynthesis</keyword>
<comment type="function">
    <text evidence="1">The alpha subunit is responsible for the aldol cleavage of indoleglycerol phosphate to indole and glyceraldehyde 3-phosphate.</text>
</comment>
<comment type="catalytic activity">
    <reaction evidence="1">
        <text>(1S,2R)-1-C-(indol-3-yl)glycerol 3-phosphate + L-serine = D-glyceraldehyde 3-phosphate + L-tryptophan + H2O</text>
        <dbReference type="Rhea" id="RHEA:10532"/>
        <dbReference type="ChEBI" id="CHEBI:15377"/>
        <dbReference type="ChEBI" id="CHEBI:33384"/>
        <dbReference type="ChEBI" id="CHEBI:57912"/>
        <dbReference type="ChEBI" id="CHEBI:58866"/>
        <dbReference type="ChEBI" id="CHEBI:59776"/>
        <dbReference type="EC" id="4.2.1.20"/>
    </reaction>
</comment>
<comment type="pathway">
    <text evidence="1">Amino-acid biosynthesis; L-tryptophan biosynthesis; L-tryptophan from chorismate: step 5/5.</text>
</comment>
<comment type="subunit">
    <text evidence="1">Tetramer of two alpha and two beta chains.</text>
</comment>
<comment type="similarity">
    <text evidence="1">Belongs to the TrpA family.</text>
</comment>
<protein>
    <recommendedName>
        <fullName evidence="1">Tryptophan synthase alpha chain</fullName>
        <ecNumber evidence="1">4.2.1.20</ecNumber>
    </recommendedName>
</protein>
<organism>
    <name type="scientific">Beijerinckia indica subsp. indica (strain ATCC 9039 / DSM 1715 / NCIMB 8712)</name>
    <dbReference type="NCBI Taxonomy" id="395963"/>
    <lineage>
        <taxon>Bacteria</taxon>
        <taxon>Pseudomonadati</taxon>
        <taxon>Pseudomonadota</taxon>
        <taxon>Alphaproteobacteria</taxon>
        <taxon>Hyphomicrobiales</taxon>
        <taxon>Beijerinckiaceae</taxon>
        <taxon>Beijerinckia</taxon>
    </lineage>
</organism>
<name>TRPA_BEII9</name>